<accession>Q05359</accession>
<accession>D6VPL7</accession>
<accession>E9P8S8</accession>
<organism>
    <name type="scientific">Saccharomyces cerevisiae (strain ATCC 204508 / S288c)</name>
    <name type="common">Baker's yeast</name>
    <dbReference type="NCBI Taxonomy" id="559292"/>
    <lineage>
        <taxon>Eukaryota</taxon>
        <taxon>Fungi</taxon>
        <taxon>Dikarya</taxon>
        <taxon>Ascomycota</taxon>
        <taxon>Saccharomycotina</taxon>
        <taxon>Saccharomycetes</taxon>
        <taxon>Saccharomycetales</taxon>
        <taxon>Saccharomycetaceae</taxon>
        <taxon>Saccharomyces</taxon>
    </lineage>
</organism>
<evidence type="ECO:0000255" key="1"/>
<evidence type="ECO:0000255" key="2">
    <source>
        <dbReference type="PROSITE-ProRule" id="PRU00096"/>
    </source>
</evidence>
<evidence type="ECO:0000269" key="3">
    <source>
    </source>
</evidence>
<evidence type="ECO:0000269" key="4">
    <source>
    </source>
</evidence>
<evidence type="ECO:0000305" key="5"/>
<feature type="signal peptide" evidence="3">
    <location>
        <begin position="1"/>
        <end position="22"/>
    </location>
</feature>
<feature type="chain" id="PRO_0000010408" description="Protein ERP1">
    <location>
        <begin position="23"/>
        <end position="219"/>
    </location>
</feature>
<feature type="topological domain" description="Lumenal" evidence="1">
    <location>
        <begin position="23"/>
        <end position="186"/>
    </location>
</feature>
<feature type="transmembrane region" description="Helical" evidence="1">
    <location>
        <begin position="187"/>
        <end position="207"/>
    </location>
</feature>
<feature type="topological domain" description="Cytoplasmic" evidence="1">
    <location>
        <begin position="208"/>
        <end position="219"/>
    </location>
</feature>
<feature type="domain" description="GOLD" evidence="2">
    <location>
        <begin position="32"/>
        <end position="131"/>
    </location>
</feature>
<feature type="sequence conflict" description="In Ref. 4; AAS56036." evidence="5" ref="4">
    <original>V</original>
    <variation>I</variation>
    <location>
        <position position="152"/>
    </location>
</feature>
<dbReference type="EMBL" id="L22015">
    <property type="protein sequence ID" value="AAC04958.1"/>
    <property type="molecule type" value="Genomic_DNA"/>
</dbReference>
<dbReference type="EMBL" id="AY557710">
    <property type="protein sequence ID" value="AAS56036.1"/>
    <property type="molecule type" value="Genomic_DNA"/>
</dbReference>
<dbReference type="EMBL" id="BK006935">
    <property type="protein sequence ID" value="DAA06987.1"/>
    <property type="molecule type" value="Genomic_DNA"/>
</dbReference>
<dbReference type="PIR" id="S70311">
    <property type="entry name" value="S70311"/>
</dbReference>
<dbReference type="RefSeq" id="NP_009402.1">
    <property type="nucleotide sequence ID" value="NM_001180033.1"/>
</dbReference>
<dbReference type="SMR" id="Q05359"/>
<dbReference type="BioGRID" id="31791">
    <property type="interactions" value="194"/>
</dbReference>
<dbReference type="ComplexPortal" id="CPX-1698">
    <property type="entry name" value="EMP24 complex"/>
</dbReference>
<dbReference type="DIP" id="DIP-5147N"/>
<dbReference type="FunCoup" id="Q05359">
    <property type="interactions" value="510"/>
</dbReference>
<dbReference type="IntAct" id="Q05359">
    <property type="interactions" value="86"/>
</dbReference>
<dbReference type="MINT" id="Q05359"/>
<dbReference type="STRING" id="4932.YAR002C-A"/>
<dbReference type="iPTMnet" id="Q05359"/>
<dbReference type="PaxDb" id="4932-YAR002C-A"/>
<dbReference type="PeptideAtlas" id="Q05359"/>
<dbReference type="EnsemblFungi" id="YAR002C-A_mRNA">
    <property type="protein sequence ID" value="YAR002C-A"/>
    <property type="gene ID" value="YAR002C-A"/>
</dbReference>
<dbReference type="GeneID" id="851264"/>
<dbReference type="KEGG" id="sce:YAR002C-A"/>
<dbReference type="AGR" id="SGD:S000002129"/>
<dbReference type="SGD" id="S000002129">
    <property type="gene designation" value="ERP1"/>
</dbReference>
<dbReference type="VEuPathDB" id="FungiDB:YAR002C-A"/>
<dbReference type="eggNOG" id="KOG1690">
    <property type="taxonomic scope" value="Eukaryota"/>
</dbReference>
<dbReference type="GeneTree" id="ENSGT00940000175286"/>
<dbReference type="HOGENOM" id="CLU_066963_2_1_1"/>
<dbReference type="InParanoid" id="Q05359"/>
<dbReference type="OMA" id="GATCAWQ"/>
<dbReference type="OrthoDB" id="3427at2759"/>
<dbReference type="BioCyc" id="YEAST:G3O-28890-MONOMER"/>
<dbReference type="Reactome" id="R-SCE-6807878">
    <property type="pathway name" value="COPI-mediated anterograde transport"/>
</dbReference>
<dbReference type="Reactome" id="R-SCE-6811434">
    <property type="pathway name" value="COPI-dependent Golgi-to-ER retrograde traffic"/>
</dbReference>
<dbReference type="BioGRID-ORCS" id="851264">
    <property type="hits" value="0 hits in 10 CRISPR screens"/>
</dbReference>
<dbReference type="PRO" id="PR:Q05359"/>
<dbReference type="Proteomes" id="UP000002311">
    <property type="component" value="Chromosome I"/>
</dbReference>
<dbReference type="RNAct" id="Q05359">
    <property type="molecule type" value="protein"/>
</dbReference>
<dbReference type="GO" id="GO:0030134">
    <property type="term" value="C:COPII-coated ER to Golgi transport vesicle"/>
    <property type="evidence" value="ECO:0000314"/>
    <property type="project" value="SGD"/>
</dbReference>
<dbReference type="GO" id="GO:0005783">
    <property type="term" value="C:endoplasmic reticulum"/>
    <property type="evidence" value="ECO:0000318"/>
    <property type="project" value="GO_Central"/>
</dbReference>
<dbReference type="GO" id="GO:0005789">
    <property type="term" value="C:endoplasmic reticulum membrane"/>
    <property type="evidence" value="ECO:0000303"/>
    <property type="project" value="ComplexPortal"/>
</dbReference>
<dbReference type="GO" id="GO:0005793">
    <property type="term" value="C:endoplasmic reticulum-Golgi intermediate compartment"/>
    <property type="evidence" value="ECO:0000318"/>
    <property type="project" value="GO_Central"/>
</dbReference>
<dbReference type="GO" id="GO:0005794">
    <property type="term" value="C:Golgi apparatus"/>
    <property type="evidence" value="ECO:0000318"/>
    <property type="project" value="GO_Central"/>
</dbReference>
<dbReference type="GO" id="GO:0005798">
    <property type="term" value="C:Golgi-associated vesicle"/>
    <property type="evidence" value="ECO:0000303"/>
    <property type="project" value="ComplexPortal"/>
</dbReference>
<dbReference type="GO" id="GO:0005739">
    <property type="term" value="C:mitochondrion"/>
    <property type="evidence" value="ECO:0007005"/>
    <property type="project" value="SGD"/>
</dbReference>
<dbReference type="GO" id="GO:0006888">
    <property type="term" value="P:endoplasmic reticulum to Golgi vesicle-mediated transport"/>
    <property type="evidence" value="ECO:0000315"/>
    <property type="project" value="SGD"/>
</dbReference>
<dbReference type="GO" id="GO:0007030">
    <property type="term" value="P:Golgi organization"/>
    <property type="evidence" value="ECO:0000318"/>
    <property type="project" value="GO_Central"/>
</dbReference>
<dbReference type="GO" id="GO:0006886">
    <property type="term" value="P:intracellular protein transport"/>
    <property type="evidence" value="ECO:0000318"/>
    <property type="project" value="GO_Central"/>
</dbReference>
<dbReference type="GO" id="GO:0006621">
    <property type="term" value="P:protein retention in ER lumen"/>
    <property type="evidence" value="ECO:0000315"/>
    <property type="project" value="SGD"/>
</dbReference>
<dbReference type="GO" id="GO:0006900">
    <property type="term" value="P:vesicle budding from membrane"/>
    <property type="evidence" value="ECO:0000303"/>
    <property type="project" value="ComplexPortal"/>
</dbReference>
<dbReference type="InterPro" id="IPR015720">
    <property type="entry name" value="Emp24-like"/>
</dbReference>
<dbReference type="InterPro" id="IPR009038">
    <property type="entry name" value="GOLD_dom"/>
</dbReference>
<dbReference type="PANTHER" id="PTHR22811">
    <property type="entry name" value="TRANSMEMBRANE EMP24 DOMAIN-CONTAINING PROTEIN"/>
    <property type="match status" value="1"/>
</dbReference>
<dbReference type="Pfam" id="PF01105">
    <property type="entry name" value="EMP24_GP25L"/>
    <property type="match status" value="1"/>
</dbReference>
<dbReference type="SMART" id="SM01190">
    <property type="entry name" value="EMP24_GP25L"/>
    <property type="match status" value="1"/>
</dbReference>
<dbReference type="PROSITE" id="PS50866">
    <property type="entry name" value="GOLD"/>
    <property type="match status" value="1"/>
</dbReference>
<sequence length="219" mass="24723">MLLTSLLQVFACCLVLPAQVTAFYYYTSGAERKCFHKELSKGTLFQATYKAQIYDDQLQNYRDAGAQDFGVLIDIEETFDDNHLVVHQKGSASGDLTFLASDSGEHKICIQPEAGGWLIKAKTKIDVEFQVGSDEKLDSKGKATIDILHAKVNVLNSKIGEIRREQKLMRDREATFRDASEAVNSRAMWWIVIQLIVLAVTCGWQMKHLGKFFVKQKIL</sequence>
<protein>
    <recommendedName>
        <fullName>Protein ERP1</fullName>
    </recommendedName>
</protein>
<gene>
    <name type="primary">ERP1</name>
    <name type="ordered locus">YAR002C-A</name>
    <name type="ORF">YAR002A</name>
</gene>
<comment type="function">
    <text>Involved in vesicular protein trafficking.</text>
</comment>
<comment type="subunit">
    <text>Associates with EMP24, ERV25 and ERP2.</text>
</comment>
<comment type="interaction">
    <interactant intactId="EBI-6581">
        <id>Q05359</id>
    </interactant>
    <interactant intactId="EBI-6598">
        <id>Q12450</id>
        <label>ERP4</label>
    </interactant>
    <organismsDiffer>false</organismsDiffer>
    <experiments>4</experiments>
</comment>
<comment type="interaction">
    <interactant intactId="EBI-6581">
        <id>Q05359</id>
    </interactant>
    <interactant intactId="EBI-2058104">
        <id>P53198</id>
        <label>ERP6</label>
    </interactant>
    <organismsDiffer>false</organismsDiffer>
    <experiments>3</experiments>
</comment>
<comment type="interaction">
    <interactant intactId="EBI-6581">
        <id>Q05359</id>
    </interactant>
    <interactant intactId="EBI-6642">
        <id>P54837</id>
        <label>ERV25</label>
    </interactant>
    <organismsDiffer>false</organismsDiffer>
    <experiments>6</experiments>
</comment>
<comment type="interaction">
    <interactant intactId="EBI-6581">
        <id>Q05359</id>
    </interactant>
    <interactant intactId="EBI-23662">
        <id>P53337</id>
        <label>ERV29</label>
    </interactant>
    <organismsDiffer>false</organismsDiffer>
    <experiments>3</experiments>
</comment>
<comment type="subcellular location">
    <subcellularLocation>
        <location evidence="3">Endoplasmic reticulum membrane</location>
        <topology evidence="3">Single-pass type I membrane protein</topology>
    </subcellularLocation>
</comment>
<comment type="miscellaneous">
    <text evidence="4">Present with 20700 molecules/cell in log phase SD medium.</text>
</comment>
<comment type="similarity">
    <text evidence="5">Belongs to the EMP24/GP25L family.</text>
</comment>
<name>ERP1_YEAST</name>
<proteinExistence type="evidence at protein level"/>
<reference key="1">
    <citation type="journal article" date="1994" name="Yeast">
        <title>Sequencing of chromosome I of Saccharomyces cerevisiae: analysis of the 42 kbp SPO7-CENI-CDC15 region.</title>
        <authorList>
            <person name="Clark M.W."/>
            <person name="Keng T."/>
            <person name="Storms R.K."/>
            <person name="Zhong W.-W."/>
            <person name="Fortin N."/>
            <person name="Zeng B."/>
            <person name="Delaney S."/>
            <person name="Ouellette B.F.F."/>
            <person name="Barton A.B."/>
            <person name="Kaback D.B."/>
            <person name="Bussey H."/>
        </authorList>
    </citation>
    <scope>NUCLEOTIDE SEQUENCE [GENOMIC DNA]</scope>
    <source>
        <strain>ATCC 204511 / S288c / AB972</strain>
    </source>
</reference>
<reference key="2">
    <citation type="journal article" date="1995" name="Proc. Natl. Acad. Sci. U.S.A.">
        <title>The nucleotide sequence of chromosome I from Saccharomyces cerevisiae.</title>
        <authorList>
            <person name="Bussey H."/>
            <person name="Kaback D.B."/>
            <person name="Zhong W.-W."/>
            <person name="Vo D.H."/>
            <person name="Clark M.W."/>
            <person name="Fortin N."/>
            <person name="Hall J."/>
            <person name="Ouellette B.F.F."/>
            <person name="Keng T."/>
            <person name="Barton A.B."/>
            <person name="Su Y."/>
            <person name="Davies C.J."/>
            <person name="Storms R.K."/>
        </authorList>
    </citation>
    <scope>NUCLEOTIDE SEQUENCE [LARGE SCALE GENOMIC DNA]</scope>
    <source>
        <strain>ATCC 204508 / S288c</strain>
    </source>
</reference>
<reference key="3">
    <citation type="journal article" date="2014" name="G3 (Bethesda)">
        <title>The reference genome sequence of Saccharomyces cerevisiae: Then and now.</title>
        <authorList>
            <person name="Engel S.R."/>
            <person name="Dietrich F.S."/>
            <person name="Fisk D.G."/>
            <person name="Binkley G."/>
            <person name="Balakrishnan R."/>
            <person name="Costanzo M.C."/>
            <person name="Dwight S.S."/>
            <person name="Hitz B.C."/>
            <person name="Karra K."/>
            <person name="Nash R.S."/>
            <person name="Weng S."/>
            <person name="Wong E.D."/>
            <person name="Lloyd P."/>
            <person name="Skrzypek M.S."/>
            <person name="Miyasato S.R."/>
            <person name="Simison M."/>
            <person name="Cherry J.M."/>
        </authorList>
    </citation>
    <scope>GENOME REANNOTATION</scope>
    <source>
        <strain>ATCC 204508 / S288c</strain>
    </source>
</reference>
<reference key="4">
    <citation type="journal article" date="2007" name="Genome Res.">
        <title>Approaching a complete repository of sequence-verified protein-encoding clones for Saccharomyces cerevisiae.</title>
        <authorList>
            <person name="Hu Y."/>
            <person name="Rolfs A."/>
            <person name="Bhullar B."/>
            <person name="Murthy T.V.S."/>
            <person name="Zhu C."/>
            <person name="Berger M.F."/>
            <person name="Camargo A.A."/>
            <person name="Kelley F."/>
            <person name="McCarron S."/>
            <person name="Jepson D."/>
            <person name="Richardson A."/>
            <person name="Raphael J."/>
            <person name="Moreira D."/>
            <person name="Taycher E."/>
            <person name="Zuo D."/>
            <person name="Mohr S."/>
            <person name="Kane M.F."/>
            <person name="Williamson J."/>
            <person name="Simpson A.J.G."/>
            <person name="Bulyk M.L."/>
            <person name="Harlow E."/>
            <person name="Marsischky G."/>
            <person name="Kolodner R.D."/>
            <person name="LaBaer J."/>
        </authorList>
    </citation>
    <scope>NUCLEOTIDE SEQUENCE [GENOMIC DNA]</scope>
    <source>
        <strain>ATCC 204508 / S288c</strain>
    </source>
</reference>
<reference key="5">
    <citation type="journal article" date="1999" name="Mol. Biol. Cell">
        <title>Erp1p and Erp2p, partners for Emp24p and Erv25p in a yeast p24 complex.</title>
        <authorList>
            <person name="Marzioch M."/>
            <person name="Henthorn D.C."/>
            <person name="Herrmann J.M."/>
            <person name="Wilson R."/>
            <person name="Thomas D.Y."/>
            <person name="Bergeron J.J.M."/>
            <person name="Solari R.C."/>
            <person name="Rowley A."/>
        </authorList>
    </citation>
    <scope>CHARACTERIZATION</scope>
</reference>
<reference key="6">
    <citation type="journal article" date="2000" name="FEBS Lett.">
        <title>Proteins in the early Golgi compartment of Saccharomyces cerevisiae immunoisolated by Sed5p.</title>
        <authorList>
            <person name="Cho J.-H."/>
            <person name="Noda Y."/>
            <person name="Yoda K."/>
        </authorList>
    </citation>
    <scope>PROTEIN SEQUENCE OF 23-27</scope>
    <scope>SUBCELLULAR LOCATION</scope>
</reference>
<reference key="7">
    <citation type="journal article" date="2003" name="Nature">
        <title>Global analysis of protein expression in yeast.</title>
        <authorList>
            <person name="Ghaemmaghami S."/>
            <person name="Huh W.-K."/>
            <person name="Bower K."/>
            <person name="Howson R.W."/>
            <person name="Belle A."/>
            <person name="Dephoure N."/>
            <person name="O'Shea E.K."/>
            <person name="Weissman J.S."/>
        </authorList>
    </citation>
    <scope>LEVEL OF PROTEIN EXPRESSION [LARGE SCALE ANALYSIS]</scope>
</reference>
<reference key="8">
    <citation type="journal article" date="2006" name="Proc. Natl. Acad. Sci. U.S.A.">
        <title>A global topology map of the Saccharomyces cerevisiae membrane proteome.</title>
        <authorList>
            <person name="Kim H."/>
            <person name="Melen K."/>
            <person name="Oesterberg M."/>
            <person name="von Heijne G."/>
        </authorList>
    </citation>
    <scope>TOPOLOGY [LARGE SCALE ANALYSIS]</scope>
    <source>
        <strain>ATCC 208353 / W303-1A</strain>
    </source>
</reference>
<keyword id="KW-0903">Direct protein sequencing</keyword>
<keyword id="KW-0256">Endoplasmic reticulum</keyword>
<keyword id="KW-0931">ER-Golgi transport</keyword>
<keyword id="KW-0472">Membrane</keyword>
<keyword id="KW-0653">Protein transport</keyword>
<keyword id="KW-1185">Reference proteome</keyword>
<keyword id="KW-0732">Signal</keyword>
<keyword id="KW-0812">Transmembrane</keyword>
<keyword id="KW-1133">Transmembrane helix</keyword>
<keyword id="KW-0813">Transport</keyword>